<comment type="function">
    <text evidence="1">Part of the ABC transporter complex PhnCDE involved in phosphonates import. Responsible for energy coupling to the transport system.</text>
</comment>
<comment type="catalytic activity">
    <reaction evidence="1">
        <text>phosphonate(out) + ATP + H2O = phosphonate(in) + ADP + phosphate + H(+)</text>
        <dbReference type="Rhea" id="RHEA:18065"/>
        <dbReference type="ChEBI" id="CHEBI:15377"/>
        <dbReference type="ChEBI" id="CHEBI:15378"/>
        <dbReference type="ChEBI" id="CHEBI:16215"/>
        <dbReference type="ChEBI" id="CHEBI:30616"/>
        <dbReference type="ChEBI" id="CHEBI:43474"/>
        <dbReference type="ChEBI" id="CHEBI:456216"/>
        <dbReference type="EC" id="7.3.2.2"/>
    </reaction>
</comment>
<comment type="subunit">
    <text evidence="1">The complex is composed of two ATP-binding proteins (PhnC), two transmembrane proteins (PhnE) and a solute-binding protein (PhnD).</text>
</comment>
<comment type="subcellular location">
    <subcellularLocation>
        <location evidence="1">Cell inner membrane</location>
        <topology evidence="1">Peripheral membrane protein</topology>
    </subcellularLocation>
</comment>
<comment type="similarity">
    <text evidence="1">Belongs to the ABC transporter superfamily. Phosphonates importer (TC 3.A.1.9.1) family.</text>
</comment>
<sequence length="265" mass="28770">MTLRLSAIELRHSDGTLALRGLDLSIARGERVAIIGPSGAGKTTLLNLLASALPPSAGQLQVLGTDPWQLSSKRRQRLRSRIALIHQAPPLPARQRVVTAVSAGRLGQWGLGKSLLNLLHPLDISGAREVLARLDLADKLFERCQQLSGGQLQRVGIARALYQQPELLLADEPVSAMDPRLADHTLALLGQHAIEHNVTLVASLHAVELALAHFPRIIGVRDGRIHFDLAASEVGREHLDTLYANEQLSPQPVSDAAETRWTPRC</sequence>
<proteinExistence type="inferred from homology"/>
<organism>
    <name type="scientific">Pseudomonas syringae pv. syringae (strain B728a)</name>
    <dbReference type="NCBI Taxonomy" id="205918"/>
    <lineage>
        <taxon>Bacteria</taxon>
        <taxon>Pseudomonadati</taxon>
        <taxon>Pseudomonadota</taxon>
        <taxon>Gammaproteobacteria</taxon>
        <taxon>Pseudomonadales</taxon>
        <taxon>Pseudomonadaceae</taxon>
        <taxon>Pseudomonas</taxon>
        <taxon>Pseudomonas syringae</taxon>
    </lineage>
</organism>
<accession>Q4ZYK8</accession>
<name>PHNC1_PSEU2</name>
<reference key="1">
    <citation type="journal article" date="2005" name="Proc. Natl. Acad. Sci. U.S.A.">
        <title>Comparison of the complete genome sequences of Pseudomonas syringae pv. syringae B728a and pv. tomato DC3000.</title>
        <authorList>
            <person name="Feil H."/>
            <person name="Feil W.S."/>
            <person name="Chain P."/>
            <person name="Larimer F."/>
            <person name="Dibartolo G."/>
            <person name="Copeland A."/>
            <person name="Lykidis A."/>
            <person name="Trong S."/>
            <person name="Nolan M."/>
            <person name="Goltsman E."/>
            <person name="Thiel J."/>
            <person name="Malfatti S."/>
            <person name="Loper J.E."/>
            <person name="Lapidus A."/>
            <person name="Detter J.C."/>
            <person name="Land M."/>
            <person name="Richardson P.M."/>
            <person name="Kyrpides N.C."/>
            <person name="Ivanova N."/>
            <person name="Lindow S.E."/>
        </authorList>
    </citation>
    <scope>NUCLEOTIDE SEQUENCE [LARGE SCALE GENOMIC DNA]</scope>
    <source>
        <strain>B728a</strain>
    </source>
</reference>
<gene>
    <name evidence="1" type="primary">phnC1</name>
    <name type="ordered locus">Psyr_0694</name>
</gene>
<evidence type="ECO:0000255" key="1">
    <source>
        <dbReference type="HAMAP-Rule" id="MF_01713"/>
    </source>
</evidence>
<keyword id="KW-0067">ATP-binding</keyword>
<keyword id="KW-0997">Cell inner membrane</keyword>
<keyword id="KW-1003">Cell membrane</keyword>
<keyword id="KW-0472">Membrane</keyword>
<keyword id="KW-0547">Nucleotide-binding</keyword>
<keyword id="KW-0918">Phosphonate transport</keyword>
<keyword id="KW-1278">Translocase</keyword>
<keyword id="KW-0813">Transport</keyword>
<dbReference type="EC" id="7.3.2.2" evidence="1"/>
<dbReference type="EMBL" id="CP000075">
    <property type="protein sequence ID" value="AAY35764.1"/>
    <property type="molecule type" value="Genomic_DNA"/>
</dbReference>
<dbReference type="RefSeq" id="WP_003403548.1">
    <property type="nucleotide sequence ID" value="NC_007005.1"/>
</dbReference>
<dbReference type="RefSeq" id="YP_233802.1">
    <property type="nucleotide sequence ID" value="NC_007005.1"/>
</dbReference>
<dbReference type="SMR" id="Q4ZYK8"/>
<dbReference type="STRING" id="205918.Psyr_0694"/>
<dbReference type="KEGG" id="psb:Psyr_0694"/>
<dbReference type="PATRIC" id="fig|205918.7.peg.719"/>
<dbReference type="eggNOG" id="COG3638">
    <property type="taxonomic scope" value="Bacteria"/>
</dbReference>
<dbReference type="HOGENOM" id="CLU_000604_1_22_6"/>
<dbReference type="OrthoDB" id="9802264at2"/>
<dbReference type="Proteomes" id="UP000000426">
    <property type="component" value="Chromosome"/>
</dbReference>
<dbReference type="GO" id="GO:0005886">
    <property type="term" value="C:plasma membrane"/>
    <property type="evidence" value="ECO:0007669"/>
    <property type="project" value="UniProtKB-SubCell"/>
</dbReference>
<dbReference type="GO" id="GO:0015416">
    <property type="term" value="F:ABC-type phosphonate transporter activity"/>
    <property type="evidence" value="ECO:0007669"/>
    <property type="project" value="UniProtKB-EC"/>
</dbReference>
<dbReference type="GO" id="GO:0005524">
    <property type="term" value="F:ATP binding"/>
    <property type="evidence" value="ECO:0007669"/>
    <property type="project" value="UniProtKB-KW"/>
</dbReference>
<dbReference type="GO" id="GO:0016887">
    <property type="term" value="F:ATP hydrolysis activity"/>
    <property type="evidence" value="ECO:0007669"/>
    <property type="project" value="InterPro"/>
</dbReference>
<dbReference type="Gene3D" id="3.40.50.300">
    <property type="entry name" value="P-loop containing nucleotide triphosphate hydrolases"/>
    <property type="match status" value="1"/>
</dbReference>
<dbReference type="InterPro" id="IPR003593">
    <property type="entry name" value="AAA+_ATPase"/>
</dbReference>
<dbReference type="InterPro" id="IPR003439">
    <property type="entry name" value="ABC_transporter-like_ATP-bd"/>
</dbReference>
<dbReference type="InterPro" id="IPR017871">
    <property type="entry name" value="ABC_transporter-like_CS"/>
</dbReference>
<dbReference type="InterPro" id="IPR050086">
    <property type="entry name" value="MetN_ABC_transporter-like"/>
</dbReference>
<dbReference type="InterPro" id="IPR027417">
    <property type="entry name" value="P-loop_NTPase"/>
</dbReference>
<dbReference type="PANTHER" id="PTHR43166">
    <property type="entry name" value="AMINO ACID IMPORT ATP-BINDING PROTEIN"/>
    <property type="match status" value="1"/>
</dbReference>
<dbReference type="PANTHER" id="PTHR43166:SF6">
    <property type="entry name" value="PHOSPHONATES IMPORT ATP-BINDING PROTEIN PHNC"/>
    <property type="match status" value="1"/>
</dbReference>
<dbReference type="Pfam" id="PF00005">
    <property type="entry name" value="ABC_tran"/>
    <property type="match status" value="1"/>
</dbReference>
<dbReference type="SMART" id="SM00382">
    <property type="entry name" value="AAA"/>
    <property type="match status" value="1"/>
</dbReference>
<dbReference type="SUPFAM" id="SSF52540">
    <property type="entry name" value="P-loop containing nucleoside triphosphate hydrolases"/>
    <property type="match status" value="1"/>
</dbReference>
<dbReference type="PROSITE" id="PS00211">
    <property type="entry name" value="ABC_TRANSPORTER_1"/>
    <property type="match status" value="1"/>
</dbReference>
<dbReference type="PROSITE" id="PS50893">
    <property type="entry name" value="ABC_TRANSPORTER_2"/>
    <property type="match status" value="1"/>
</dbReference>
<dbReference type="PROSITE" id="PS51249">
    <property type="entry name" value="PHNC"/>
    <property type="match status" value="1"/>
</dbReference>
<protein>
    <recommendedName>
        <fullName evidence="1">Phosphonates import ATP-binding protein PhnC 1</fullName>
        <ecNumber evidence="1">7.3.2.2</ecNumber>
    </recommendedName>
</protein>
<feature type="chain" id="PRO_0000274730" description="Phosphonates import ATP-binding protein PhnC 1">
    <location>
        <begin position="1"/>
        <end position="265"/>
    </location>
</feature>
<feature type="domain" description="ABC transporter" evidence="1">
    <location>
        <begin position="3"/>
        <end position="247"/>
    </location>
</feature>
<feature type="binding site" evidence="1">
    <location>
        <begin position="36"/>
        <end position="43"/>
    </location>
    <ligand>
        <name>ATP</name>
        <dbReference type="ChEBI" id="CHEBI:30616"/>
    </ligand>
</feature>